<organism evidence="11">
    <name type="scientific">Caenorhabditis elegans</name>
    <dbReference type="NCBI Taxonomy" id="6239"/>
    <lineage>
        <taxon>Eukaryota</taxon>
        <taxon>Metazoa</taxon>
        <taxon>Ecdysozoa</taxon>
        <taxon>Nematoda</taxon>
        <taxon>Chromadorea</taxon>
        <taxon>Rhabditida</taxon>
        <taxon>Rhabditina</taxon>
        <taxon>Rhabditomorpha</taxon>
        <taxon>Rhabditoidea</taxon>
        <taxon>Rhabditidae</taxon>
        <taxon>Peloderinae</taxon>
        <taxon>Caenorhabditis</taxon>
    </lineage>
</organism>
<feature type="signal peptide" evidence="2">
    <location>
        <begin position="1"/>
        <end position="19"/>
    </location>
</feature>
<feature type="propeptide" id="PRO_0000447484" evidence="2">
    <location>
        <begin position="20"/>
        <end position="146"/>
    </location>
</feature>
<feature type="chain" id="PRO_0000447485" description="Heme peroxidase 2 light chain" evidence="3">
    <location>
        <begin position="147"/>
        <end position="259"/>
    </location>
</feature>
<feature type="chain" id="PRO_0000447486" description="Heme peroxidase 2 heavy chain" evidence="3">
    <location>
        <begin position="260"/>
        <end position="718"/>
    </location>
</feature>
<feature type="region of interest" description="Disordered" evidence="5">
    <location>
        <begin position="41"/>
        <end position="64"/>
    </location>
</feature>
<feature type="region of interest" description="Disordered" evidence="5">
    <location>
        <begin position="108"/>
        <end position="144"/>
    </location>
</feature>
<feature type="compositionally biased region" description="Polar residues" evidence="5">
    <location>
        <begin position="45"/>
        <end position="64"/>
    </location>
</feature>
<feature type="compositionally biased region" description="Low complexity" evidence="5">
    <location>
        <begin position="109"/>
        <end position="118"/>
    </location>
</feature>
<feature type="compositionally biased region" description="Basic residues" evidence="5">
    <location>
        <begin position="126"/>
        <end position="139"/>
    </location>
</feature>
<feature type="active site" description="Proton acceptor" evidence="3">
    <location>
        <position position="241"/>
    </location>
</feature>
<feature type="binding site" evidence="3">
    <location>
        <position position="242"/>
    </location>
    <ligand>
        <name>Ca(2+)</name>
        <dbReference type="ChEBI" id="CHEBI:29108"/>
    </ligand>
</feature>
<feature type="binding site" evidence="3">
    <location>
        <position position="311"/>
    </location>
    <ligand>
        <name>Ca(2+)</name>
        <dbReference type="ChEBI" id="CHEBI:29108"/>
    </ligand>
</feature>
<feature type="binding site" evidence="3">
    <location>
        <position position="313"/>
    </location>
    <ligand>
        <name>Ca(2+)</name>
        <dbReference type="ChEBI" id="CHEBI:29108"/>
    </ligand>
</feature>
<feature type="binding site" evidence="3">
    <location>
        <position position="315"/>
    </location>
    <ligand>
        <name>Ca(2+)</name>
        <dbReference type="ChEBI" id="CHEBI:29108"/>
    </ligand>
</feature>
<feature type="binding site" evidence="3">
    <location>
        <position position="317"/>
    </location>
    <ligand>
        <name>Ca(2+)</name>
        <dbReference type="ChEBI" id="CHEBI:29108"/>
    </ligand>
</feature>
<feature type="binding site" description="axial binding residue" evidence="3">
    <location>
        <position position="477"/>
    </location>
    <ligand>
        <name>heme b</name>
        <dbReference type="ChEBI" id="CHEBI:60344"/>
    </ligand>
    <ligandPart>
        <name>Fe</name>
        <dbReference type="ChEBI" id="CHEBI:18248"/>
    </ligandPart>
</feature>
<feature type="site" description="Transition state stabilizer" evidence="10">
    <location>
        <position position="373"/>
    </location>
</feature>
<feature type="glycosylation site" description="N-linked (GlcNAc...) asparagine" evidence="4">
    <location>
        <position position="354"/>
    </location>
</feature>
<feature type="glycosylation site" description="N-linked (GlcNAc...) asparagine" evidence="4">
    <location>
        <position position="551"/>
    </location>
</feature>
<feature type="glycosylation site" description="N-linked (GlcNAc...) asparagine" evidence="4">
    <location>
        <position position="592"/>
    </location>
</feature>
<feature type="glycosylation site" description="N-linked (GlcNAc...) asparagine" evidence="4">
    <location>
        <position position="662"/>
    </location>
</feature>
<feature type="glycosylation site" description="N-linked (GlcNAc...) asparagine" evidence="4">
    <location>
        <position position="673"/>
    </location>
</feature>
<feature type="disulfide bond" evidence="3">
    <location>
        <begin position="149"/>
        <end position="164"/>
    </location>
</feature>
<feature type="disulfide bond" evidence="3">
    <location>
        <begin position="262"/>
        <end position="272"/>
    </location>
</feature>
<feature type="disulfide bond" evidence="3">
    <location>
        <begin position="358"/>
        <end position="366"/>
    </location>
</feature>
<feature type="disulfide bond" evidence="3">
    <location>
        <begin position="682"/>
        <end position="705"/>
    </location>
</feature>
<feature type="mutagenesis site" description="In gk252521; reduced survival in response to infection by E.faecalis, C.albicans, S.aureus and C.diphtheriae. Slightly reduced survival in response to infection by E.coli. Loss of cuticle integrity." evidence="7">
    <location>
        <begin position="133"/>
        <end position="718"/>
    </location>
</feature>
<feature type="mutagenesis site" description="In dg047; reduced survival in response to infection by E.faecalis, C.albicans, S.aureus and C.diphtheriae. Slightly reduced survival in response to infection by E.coli. Loss of cuticle integrity." evidence="7">
    <location>
        <begin position="210"/>
        <end position="718"/>
    </location>
</feature>
<feature type="mutagenesis site" description="In syb482; reduced survival in response to infection by E.faecalis." evidence="7">
    <original>R</original>
    <variation>A</variation>
    <location>
        <position position="373"/>
    </location>
</feature>
<protein>
    <recommendedName>
        <fullName evidence="8 12">Heme peroxidase 2</fullName>
        <ecNumber evidence="1">1.11.1.7</ecNumber>
    </recommendedName>
    <component>
        <recommendedName>
            <fullName evidence="2">Heme peroxidase 2 light chain</fullName>
        </recommendedName>
    </component>
    <component>
        <recommendedName>
            <fullName evidence="2">Heme peroxidase 2 heavy chain</fullName>
        </recommendedName>
    </component>
</protein>
<accession>P90820</accession>
<reference evidence="11" key="1">
    <citation type="journal article" date="1998" name="Science">
        <title>Genome sequence of the nematode C. elegans: a platform for investigating biology.</title>
        <authorList>
            <consortium name="The C. elegans sequencing consortium"/>
        </authorList>
    </citation>
    <scope>NUCLEOTIDE SEQUENCE [LARGE SCALE GENOMIC DNA]</scope>
    <source>
        <strain evidence="11">Bristol N2</strain>
    </source>
</reference>
<reference evidence="9" key="2">
    <citation type="journal article" date="2014" name="Genetics">
        <title>The SKPO-1 peroxidase functions in the hypodermis to protect Caenorhabditis elegans from bacterial infection.</title>
        <authorList>
            <person name="Tiller G.R."/>
            <person name="Garsin D.A."/>
        </authorList>
    </citation>
    <scope>FUNCTION</scope>
    <scope>DISRUPTION PHENOTYPE</scope>
</reference>
<reference evidence="9" key="3">
    <citation type="journal article" date="2019" name="PLoS Genet.">
        <title>Heme peroxidase HPX-2 protects Caenorhabditis elegans from pathogens.</title>
        <authorList>
            <person name="Liu Y."/>
            <person name="Kaval K.G."/>
            <person name="van Hoof A."/>
            <person name="Garsin D.A."/>
        </authorList>
    </citation>
    <scope>FUNCTION</scope>
    <scope>TISSUE SPECIFICITY</scope>
    <scope>DISRUPTION PHENOTYPE</scope>
    <scope>MUTAGENESIS OF 133-ARG--ARG-718; 210-LEU--ARG-718 AND ARG-373</scope>
</reference>
<keyword id="KW-0106">Calcium</keyword>
<keyword id="KW-1015">Disulfide bond</keyword>
<keyword id="KW-0325">Glycoprotein</keyword>
<keyword id="KW-0349">Heme</keyword>
<keyword id="KW-0408">Iron</keyword>
<keyword id="KW-0479">Metal-binding</keyword>
<keyword id="KW-0560">Oxidoreductase</keyword>
<keyword id="KW-0575">Peroxidase</keyword>
<keyword id="KW-1185">Reference proteome</keyword>
<keyword id="KW-0964">Secreted</keyword>
<keyword id="KW-0732">Signal</keyword>
<gene>
    <name evidence="8 12" type="primary">hpx-2</name>
    <name evidence="12" type="ORF">F09F3.5</name>
</gene>
<evidence type="ECO:0000250" key="1">
    <source>
        <dbReference type="UniProtKB" id="Q23490"/>
    </source>
</evidence>
<evidence type="ECO:0000255" key="2"/>
<evidence type="ECO:0000255" key="3">
    <source>
        <dbReference type="PROSITE-ProRule" id="PRU00298"/>
    </source>
</evidence>
<evidence type="ECO:0000255" key="4">
    <source>
        <dbReference type="PROSITE-ProRule" id="PRU00498"/>
    </source>
</evidence>
<evidence type="ECO:0000256" key="5">
    <source>
        <dbReference type="SAM" id="MobiDB-lite"/>
    </source>
</evidence>
<evidence type="ECO:0000269" key="6">
    <source>
    </source>
</evidence>
<evidence type="ECO:0000269" key="7">
    <source>
    </source>
</evidence>
<evidence type="ECO:0000303" key="8">
    <source>
    </source>
</evidence>
<evidence type="ECO:0000305" key="9"/>
<evidence type="ECO:0000305" key="10">
    <source>
    </source>
</evidence>
<evidence type="ECO:0000312" key="11">
    <source>
        <dbReference type="Proteomes" id="UP000001940"/>
    </source>
</evidence>
<evidence type="ECO:0000312" key="12">
    <source>
        <dbReference type="WormBase" id="F09F3.5"/>
    </source>
</evidence>
<dbReference type="EC" id="1.11.1.7" evidence="1"/>
<dbReference type="EMBL" id="BX284605">
    <property type="protein sequence ID" value="CAB02910.1"/>
    <property type="molecule type" value="Genomic_DNA"/>
</dbReference>
<dbReference type="PIR" id="T20673">
    <property type="entry name" value="T20673"/>
</dbReference>
<dbReference type="RefSeq" id="NP_506432.1">
    <property type="nucleotide sequence ID" value="NM_074031.4"/>
</dbReference>
<dbReference type="SMR" id="P90820"/>
<dbReference type="DIP" id="DIP-24859N"/>
<dbReference type="FunCoup" id="P90820">
    <property type="interactions" value="2"/>
</dbReference>
<dbReference type="STRING" id="6239.F09F3.5.1"/>
<dbReference type="PeroxiBase" id="4147">
    <property type="entry name" value="CelPxt05"/>
</dbReference>
<dbReference type="GlyCosmos" id="P90820">
    <property type="glycosylation" value="5 sites, No reported glycans"/>
</dbReference>
<dbReference type="PaxDb" id="6239-F09F3.5"/>
<dbReference type="EnsemblMetazoa" id="F09F3.5.1">
    <property type="protein sequence ID" value="F09F3.5.1"/>
    <property type="gene ID" value="WBGene00008627"/>
</dbReference>
<dbReference type="GeneID" id="179880"/>
<dbReference type="KEGG" id="cel:CELE_F09F3.5"/>
<dbReference type="UCSC" id="F09F3.5">
    <property type="organism name" value="c. elegans"/>
</dbReference>
<dbReference type="AGR" id="WB:WBGene00008627"/>
<dbReference type="CTD" id="179880"/>
<dbReference type="WormBase" id="F09F3.5">
    <property type="protein sequence ID" value="CE20661"/>
    <property type="gene ID" value="WBGene00008627"/>
    <property type="gene designation" value="hpx-2"/>
</dbReference>
<dbReference type="eggNOG" id="KOG2408">
    <property type="taxonomic scope" value="Eukaryota"/>
</dbReference>
<dbReference type="HOGENOM" id="CLU_006087_5_0_1"/>
<dbReference type="InParanoid" id="P90820"/>
<dbReference type="OMA" id="NGQENFG"/>
<dbReference type="OrthoDB" id="823504at2759"/>
<dbReference type="PhylomeDB" id="P90820"/>
<dbReference type="PRO" id="PR:P90820"/>
<dbReference type="Proteomes" id="UP000001940">
    <property type="component" value="Chromosome V"/>
</dbReference>
<dbReference type="GO" id="GO:0005576">
    <property type="term" value="C:extracellular region"/>
    <property type="evidence" value="ECO:0007669"/>
    <property type="project" value="UniProtKB-SubCell"/>
</dbReference>
<dbReference type="GO" id="GO:0020037">
    <property type="term" value="F:heme binding"/>
    <property type="evidence" value="ECO:0007669"/>
    <property type="project" value="InterPro"/>
</dbReference>
<dbReference type="GO" id="GO:0140825">
    <property type="term" value="F:lactoperoxidase activity"/>
    <property type="evidence" value="ECO:0007669"/>
    <property type="project" value="UniProtKB-EC"/>
</dbReference>
<dbReference type="GO" id="GO:0046872">
    <property type="term" value="F:metal ion binding"/>
    <property type="evidence" value="ECO:0007669"/>
    <property type="project" value="UniProtKB-KW"/>
</dbReference>
<dbReference type="GO" id="GO:0004601">
    <property type="term" value="F:peroxidase activity"/>
    <property type="evidence" value="ECO:0000318"/>
    <property type="project" value="GO_Central"/>
</dbReference>
<dbReference type="GO" id="GO:0050830">
    <property type="term" value="P:defense response to Gram-positive bacterium"/>
    <property type="evidence" value="ECO:0000315"/>
    <property type="project" value="UniProtKB"/>
</dbReference>
<dbReference type="GO" id="GO:0006979">
    <property type="term" value="P:response to oxidative stress"/>
    <property type="evidence" value="ECO:0007669"/>
    <property type="project" value="InterPro"/>
</dbReference>
<dbReference type="CDD" id="cd09823">
    <property type="entry name" value="peroxinectin_like"/>
    <property type="match status" value="1"/>
</dbReference>
<dbReference type="FunFam" id="1.10.640.10:FF:000003">
    <property type="entry name" value="chorion peroxidase"/>
    <property type="match status" value="1"/>
</dbReference>
<dbReference type="Gene3D" id="1.10.640.10">
    <property type="entry name" value="Haem peroxidase domain superfamily, animal type"/>
    <property type="match status" value="1"/>
</dbReference>
<dbReference type="InterPro" id="IPR019791">
    <property type="entry name" value="Haem_peroxidase_animal"/>
</dbReference>
<dbReference type="InterPro" id="IPR010255">
    <property type="entry name" value="Haem_peroxidase_sf"/>
</dbReference>
<dbReference type="InterPro" id="IPR037120">
    <property type="entry name" value="Haem_peroxidase_sf_animal"/>
</dbReference>
<dbReference type="PANTHER" id="PTHR11475:SF4">
    <property type="entry name" value="CHORION PEROXIDASE"/>
    <property type="match status" value="1"/>
</dbReference>
<dbReference type="PANTHER" id="PTHR11475">
    <property type="entry name" value="OXIDASE/PEROXIDASE"/>
    <property type="match status" value="1"/>
</dbReference>
<dbReference type="Pfam" id="PF03098">
    <property type="entry name" value="An_peroxidase"/>
    <property type="match status" value="1"/>
</dbReference>
<dbReference type="PRINTS" id="PR00457">
    <property type="entry name" value="ANPEROXIDASE"/>
</dbReference>
<dbReference type="SUPFAM" id="SSF48113">
    <property type="entry name" value="Heme-dependent peroxidases"/>
    <property type="match status" value="1"/>
</dbReference>
<dbReference type="PROSITE" id="PS50292">
    <property type="entry name" value="PEROXIDASE_3"/>
    <property type="match status" value="1"/>
</dbReference>
<name>HPX2_CAEEL</name>
<proteinExistence type="evidence at protein level"/>
<comment type="function">
    <text evidence="6 7">Peroxidase which is involved in maintaining the cuticle integrity in the hypodermis and pharynx (PubMed:30695063). It thus plays a role in conferring resistance against Gram-positive bacteria such as E.faecalis, S.aureus and C.diphtheriae, and yeast such as C.albicans (PubMed:24621828, PubMed:30695063).</text>
</comment>
<comment type="catalytic activity">
    <reaction evidence="1">
        <text>2 a phenolic donor + H2O2 = 2 a phenolic radical donor + 2 H2O</text>
        <dbReference type="Rhea" id="RHEA:56136"/>
        <dbReference type="ChEBI" id="CHEBI:15377"/>
        <dbReference type="ChEBI" id="CHEBI:16240"/>
        <dbReference type="ChEBI" id="CHEBI:139520"/>
        <dbReference type="ChEBI" id="CHEBI:139521"/>
        <dbReference type="EC" id="1.11.1.7"/>
    </reaction>
</comment>
<comment type="cofactor">
    <cofactor evidence="1">
        <name>heme b</name>
        <dbReference type="ChEBI" id="CHEBI:60344"/>
    </cofactor>
</comment>
<comment type="subcellular location">
    <subcellularLocation>
        <location evidence="9">Secreted</location>
    </subcellularLocation>
</comment>
<comment type="tissue specificity">
    <text evidence="7">Expressed in the hypodermis and gland cells of the pharynx (PubMed:30695063). Specifically, there is low and transient expression from the distal bulb of the pharynx to the anterior of the buccal cavity (PubMed:30695063). Whole body expression levels increase upon entry into the dauer phase (PubMed:30695063).</text>
</comment>
<comment type="disruption phenotype">
    <text evidence="6 7">RNAi-mediated knockdown results in reduced survival in response to infection by E.faecalis.</text>
</comment>
<comment type="similarity">
    <text evidence="3">Belongs to the peroxidase family.</text>
</comment>
<sequence length="718" mass="81183">MNLKPTILLFTILFLKCATFEVNEETERIVEDAVMRALDSRASENSESEQTSQHIIVSQQANSDSKSAQFTGEVLEEATRILVREFGLEILPAANEVIERWRNEEEELLQSSETTTTTEHPDPTRSKRSAIFRSKRQANRRCSSPPINCNNRFHTSIRSITGLCNNRQNSDLGNSVSPLRRILGAASYADGLGRIRTRSVNGGELPSARLISNRIHDDRNNQVFSPSINHLHMIIGQFIAHDVVFMPSSVARDGGALDCSACNSPQRVSPNCAPITIPRNDPYFNTPCMRLTRALNGQENFGVRSQIGQNSHFLDLSPVYGSADCEAETVRSFQEGKMLTFDDLGYTLPPQNANDSNCQSSAPFHCFTCGDFRNSLHPALIPVHTILIKEHNRLAEQVRVARPRFNDEQIFQLVRKIMIGMWQHIVYNEYIPKYLPRRTIRNFALRPLRNGVHRGYSTSVDPSISAEFAGAAFRFGHSQSRFDFPRLTENGRPAGNYDLGNDIFYADQMYLTRIGGWEPVMNGMVRMPAMKSDRYFSFGIRNQMFEIRGRNGSGVDLVSINIQRGRDMGLFPYIQYRQLVGLPTVTSFNELNTTFSQENIQALRNVYSDPADIDLYVGIMLEEPLSGGQLGPTASFMIGEQFRALKRGDRFFYESIAEGTDNFTQEEISELRNKTSLAKIICTNMDFAARINTDIFDHRSRQVACTSLPQLDIDRFLR</sequence>